<name>SCX2_CENSU</name>
<sequence length="66" mass="7547">KEGYLVSKSTGCKYECLKLGDNDYCLRECKQQYGKSSGGYCYAFACWCTHLYEQAVVWPLPNKTCN</sequence>
<proteinExistence type="evidence at protein level"/>
<dbReference type="PIR" id="A27406">
    <property type="entry name" value="A27406"/>
</dbReference>
<dbReference type="PDB" id="2LI7">
    <property type="method" value="NMR"/>
    <property type="chains" value="A=1-66"/>
</dbReference>
<dbReference type="PDB" id="2LJM">
    <property type="method" value="NMR"/>
    <property type="chains" value="A=1-66"/>
</dbReference>
<dbReference type="PDBsum" id="2LI7"/>
<dbReference type="PDBsum" id="2LJM"/>
<dbReference type="BMRB" id="P08900"/>
<dbReference type="SMR" id="P08900"/>
<dbReference type="EvolutionaryTrace" id="P08900"/>
<dbReference type="GO" id="GO:0005615">
    <property type="term" value="C:extracellular space"/>
    <property type="evidence" value="ECO:0000304"/>
    <property type="project" value="UniProtKB"/>
</dbReference>
<dbReference type="GO" id="GO:0019871">
    <property type="term" value="F:sodium channel inhibitor activity"/>
    <property type="evidence" value="ECO:0007669"/>
    <property type="project" value="InterPro"/>
</dbReference>
<dbReference type="GO" id="GO:0090729">
    <property type="term" value="F:toxin activity"/>
    <property type="evidence" value="ECO:0007669"/>
    <property type="project" value="UniProtKB-KW"/>
</dbReference>
<dbReference type="GO" id="GO:0006952">
    <property type="term" value="P:defense response"/>
    <property type="evidence" value="ECO:0007669"/>
    <property type="project" value="InterPro"/>
</dbReference>
<dbReference type="CDD" id="cd23106">
    <property type="entry name" value="neurotoxins_LC_scorpion"/>
    <property type="match status" value="1"/>
</dbReference>
<dbReference type="FunFam" id="3.30.30.10:FF:000002">
    <property type="entry name" value="Alpha-like toxin BmK-M1"/>
    <property type="match status" value="1"/>
</dbReference>
<dbReference type="Gene3D" id="3.30.30.10">
    <property type="entry name" value="Knottin, scorpion toxin-like"/>
    <property type="match status" value="1"/>
</dbReference>
<dbReference type="InterPro" id="IPR044062">
    <property type="entry name" value="LCN-type_CS_alpha_beta_dom"/>
</dbReference>
<dbReference type="InterPro" id="IPR003614">
    <property type="entry name" value="Scorpion_toxin-like"/>
</dbReference>
<dbReference type="InterPro" id="IPR036574">
    <property type="entry name" value="Scorpion_toxin-like_sf"/>
</dbReference>
<dbReference type="InterPro" id="IPR018218">
    <property type="entry name" value="Scorpion_toxinL"/>
</dbReference>
<dbReference type="InterPro" id="IPR002061">
    <property type="entry name" value="Scorpion_toxinL/defensin"/>
</dbReference>
<dbReference type="Pfam" id="PF00537">
    <property type="entry name" value="Toxin_3"/>
    <property type="match status" value="1"/>
</dbReference>
<dbReference type="PRINTS" id="PR00285">
    <property type="entry name" value="SCORPNTOXIN"/>
</dbReference>
<dbReference type="SMART" id="SM00505">
    <property type="entry name" value="Knot1"/>
    <property type="match status" value="1"/>
</dbReference>
<dbReference type="SUPFAM" id="SSF57095">
    <property type="entry name" value="Scorpion toxin-like"/>
    <property type="match status" value="1"/>
</dbReference>
<dbReference type="PROSITE" id="PS51863">
    <property type="entry name" value="LCN_CSAB"/>
    <property type="match status" value="1"/>
</dbReference>
<evidence type="ECO:0000255" key="1">
    <source>
        <dbReference type="PROSITE-ProRule" id="PRU01210"/>
    </source>
</evidence>
<evidence type="ECO:0000269" key="2">
    <source>
    </source>
</evidence>
<evidence type="ECO:0000269" key="3">
    <source>
    </source>
</evidence>
<evidence type="ECO:0000269" key="4">
    <source>
    </source>
</evidence>
<evidence type="ECO:0000269" key="5">
    <source>
    </source>
</evidence>
<evidence type="ECO:0000269" key="6">
    <source>
    </source>
</evidence>
<evidence type="ECO:0000269" key="7">
    <source>
    </source>
</evidence>
<evidence type="ECO:0000269" key="8">
    <source>
    </source>
</evidence>
<evidence type="ECO:0000269" key="9">
    <source>
    </source>
</evidence>
<evidence type="ECO:0000269" key="10">
    <source>
    </source>
</evidence>
<evidence type="ECO:0000303" key="11">
    <source>
    </source>
</evidence>
<evidence type="ECO:0000303" key="12">
    <source>
    </source>
</evidence>
<evidence type="ECO:0000303" key="13">
    <source>
    </source>
</evidence>
<evidence type="ECO:0000303" key="14">
    <source>
    </source>
</evidence>
<evidence type="ECO:0000303" key="15">
    <source>
    </source>
</evidence>
<evidence type="ECO:0000303" key="16">
    <source>
    </source>
</evidence>
<evidence type="ECO:0000305" key="17"/>
<evidence type="ECO:0000305" key="18">
    <source>
    </source>
</evidence>
<evidence type="ECO:0007744" key="19">
    <source>
        <dbReference type="PDB" id="2LI7"/>
    </source>
</evidence>
<evidence type="ECO:0007744" key="20">
    <source>
        <dbReference type="PDB" id="2LJM"/>
    </source>
</evidence>
<evidence type="ECO:0007829" key="21">
    <source>
        <dbReference type="PDB" id="2LI7"/>
    </source>
</evidence>
<comment type="function">
    <text evidence="2 3 7 8 9">Beta toxin that binds site-4 of sodium channels (Nav) and reduces peak current (observed on Nav1.6/SCN8A (IC(50)=307 nM)), shifts the voltage of activation toward more negative potentials (observed on Nav1.6, Nav1.1 (weak), Nav1.2 (weak), and Nav1.7 (weak)), and induces resurgent currents at negative voltages following brief and strong depolarizations (observed on Nav1.6, Nav1.1 (weak), and Nav1.7 (weak)) (PubMed:22200496). A reduction of peak current of Nav1.5/SCN7A has been observed in another study (IC(50)=35-40 nM) (PubMed:22251893). This toxin is only active on mammals (PubMed:17544584). It has been shown to bind phospholipids (PubMed:15632158).</text>
</comment>
<comment type="subcellular location">
    <subcellularLocation>
        <location evidence="9">Secreted</location>
    </subcellularLocation>
</comment>
<comment type="tissue specificity">
    <text evidence="18">Expressed by the venom gland.</text>
</comment>
<comment type="domain">
    <text evidence="17">Has the structural arrangement of an alpha-helix connected to antiparallel beta-sheets by disulfide bonds (CS-alpha/beta).</text>
</comment>
<comment type="PTM">
    <text evidence="9">C-terminal amidation increases its affinity for sodium channels.</text>
</comment>
<comment type="mass spectrometry" mass="7537.0" method="Electrospray" evidence="5 8"/>
<comment type="mass spectrometry" mass="7537.6" method="Electrospray" evidence="6"/>
<comment type="toxic dose">
    <text evidence="9">LD(50) is 25 ug/kg by subcutaneous injection into mice and 0.25 ug/kg by intracerebroventricular injection.</text>
</comment>
<comment type="toxic dose">
    <text evidence="6">LD(100) is 3 ug/kg by intracranial injection into mice.</text>
</comment>
<comment type="miscellaneous">
    <text evidence="6">Is the most abundant and deadly toxin from the venom of C.s.suffusus.</text>
</comment>
<comment type="miscellaneous">
    <text evidence="7">Negative results: does not show inhibition of peak current on Nav1.1, Nav1.2, Nav1.3, Nav1.4, Nav1.5 and Nav1.7 (at 280 nM).</text>
</comment>
<comment type="miscellaneous">
    <text evidence="10">Is neutralized by the single-chain antibody fragment 10FG2.</text>
</comment>
<comment type="similarity">
    <text evidence="17">Belongs to the long (4 C-C) scorpion toxin superfamily. Sodium channel inhibitor family. Beta subfamily.</text>
</comment>
<keyword id="KW-0002">3D-structure</keyword>
<keyword id="KW-0027">Amidation</keyword>
<keyword id="KW-0903">Direct protein sequencing</keyword>
<keyword id="KW-1015">Disulfide bond</keyword>
<keyword id="KW-0872">Ion channel impairing toxin</keyword>
<keyword id="KW-0528">Neurotoxin</keyword>
<keyword id="KW-0964">Secreted</keyword>
<keyword id="KW-0800">Toxin</keyword>
<keyword id="KW-0738">Voltage-gated sodium channel impairing toxin</keyword>
<feature type="chain" id="PRO_0000066777" description="Beta-mammal toxin Css2" evidence="9">
    <location>
        <begin position="1"/>
        <end position="66"/>
    </location>
</feature>
<feature type="domain" description="LCN-type CS-alpha/beta" evidence="1">
    <location>
        <begin position="1"/>
        <end position="66"/>
    </location>
</feature>
<feature type="modified residue" description="Asparagine amide" evidence="8 9">
    <location>
        <position position="66"/>
    </location>
</feature>
<feature type="disulfide bond" evidence="8 19 20">
    <location>
        <begin position="12"/>
        <end position="65"/>
    </location>
</feature>
<feature type="disulfide bond" evidence="8 19 20">
    <location>
        <begin position="16"/>
        <end position="41"/>
    </location>
</feature>
<feature type="disulfide bond" evidence="8 19 20">
    <location>
        <begin position="25"/>
        <end position="46"/>
    </location>
</feature>
<feature type="disulfide bond" evidence="8 19 20">
    <location>
        <begin position="29"/>
        <end position="48"/>
    </location>
</feature>
<feature type="mutagenesis site" description="Non-amidated peptide that is not toxic to mice at concentrations up to 30 ug/20 g mouse body weight, when injected intraperitoneally." evidence="4">
    <original>E</original>
    <variation>R</variation>
    <location>
        <position position="15"/>
    </location>
</feature>
<feature type="mutagenesis site" description="Non-amidated peptide that is as potent as the amidated native peptide." evidence="5">
    <original>TCN</original>
    <variation>RCR</variation>
    <location>
        <begin position="64"/>
        <end position="66"/>
    </location>
</feature>
<feature type="mutagenesis site" description="Non-amidated peptide that is almost inactive." evidence="5">
    <original>TCN</original>
    <variation>RCS</variation>
    <location>
        <begin position="64"/>
        <end position="66"/>
    </location>
</feature>
<feature type="mutagenesis site" description="Non-amidated peptide that is less potent than the native peptide." evidence="5">
    <original>N</original>
    <variation>H</variation>
    <location>
        <position position="66"/>
    </location>
</feature>
<feature type="mutagenesis site" description="Non-amidated peptide that is less potent than the native peptide." evidence="5">
    <original>N</original>
    <variation>R</variation>
    <location>
        <position position="66"/>
    </location>
</feature>
<feature type="mutagenesis site" description="Non-amidated peptide that is almost inactive." evidence="5">
    <original>N</original>
    <variation>S</variation>
    <location>
        <position position="66"/>
    </location>
</feature>
<feature type="sequence conflict" description="In Ref. 3; no nucleotide entry." evidence="17" ref="3">
    <original>R</original>
    <variation>G</variation>
    <location>
        <position position="27"/>
    </location>
</feature>
<feature type="strand" evidence="21">
    <location>
        <begin position="8"/>
        <end position="12"/>
    </location>
</feature>
<feature type="strand" evidence="21">
    <location>
        <begin position="19"/>
        <end position="21"/>
    </location>
</feature>
<feature type="helix" evidence="21">
    <location>
        <begin position="24"/>
        <end position="33"/>
    </location>
</feature>
<feature type="strand" evidence="21">
    <location>
        <begin position="38"/>
        <end position="41"/>
    </location>
</feature>
<feature type="strand" evidence="21">
    <location>
        <begin position="43"/>
        <end position="50"/>
    </location>
</feature>
<feature type="turn" evidence="21">
    <location>
        <begin position="60"/>
        <end position="62"/>
    </location>
</feature>
<organism>
    <name type="scientific">Centruroides suffusus</name>
    <name type="common">Durango bark scorpion</name>
    <dbReference type="NCBI Taxonomy" id="6880"/>
    <lineage>
        <taxon>Eukaryota</taxon>
        <taxon>Metazoa</taxon>
        <taxon>Ecdysozoa</taxon>
        <taxon>Arthropoda</taxon>
        <taxon>Chelicerata</taxon>
        <taxon>Arachnida</taxon>
        <taxon>Scorpiones</taxon>
        <taxon>Buthida</taxon>
        <taxon>Buthoidea</taxon>
        <taxon>Buthidae</taxon>
        <taxon>Centruroides</taxon>
    </lineage>
</organism>
<reference key="1">
    <citation type="journal article" date="1987" name="J. Biol. Chem.">
        <title>Purification and chemical and biological characterizations of seven toxins from the Mexican scorpion, Centruroides suffusus suffusus.</title>
        <authorList>
            <person name="Martin M.-F."/>
            <person name="Garcia Y."/>
            <person name="Perez L.G."/>
            <person name="el Ayeb M."/>
            <person name="Kopeyan C."/>
            <person name="Bechis G."/>
            <person name="Jover E."/>
            <person name="Rochat H."/>
        </authorList>
    </citation>
    <scope>PROTEIN SEQUENCE</scope>
    <scope>FUNCTION</scope>
    <scope>TOXIC DOSE</scope>
    <scope>AMIDATION AT ASN-66</scope>
    <scope>SUBCELLULAR LOCATION</scope>
    <source>
        <tissue>Venom</tissue>
    </source>
</reference>
<reference key="2">
    <citation type="journal article" date="2000" name="Peptides">
        <title>Expression of functional recombinant scorpion beta-neurotoxin Css II in E. coli.</title>
        <authorList>
            <person name="Johnson T.M."/>
            <person name="Quick M.W."/>
            <person name="Sakai T.T."/>
            <person name="Krishna N.R."/>
        </authorList>
    </citation>
    <scope>NUCLEOTIDE SEQUENCE [GENOMIC DNA]</scope>
</reference>
<reference key="3">
    <citation type="journal article" date="2007" name="Biochim. Biophys. Acta">
        <title>Four disulfide-bridged scorpion beta neurotoxin CssII: heterologous expression and proper folding in vitro.</title>
        <authorList>
            <person name="Estrada G."/>
            <person name="Garcia B.I."/>
            <person name="Schiavon E."/>
            <person name="Ortiz E."/>
            <person name="Cestele S."/>
            <person name="Wanke E."/>
            <person name="Possani L.D."/>
            <person name="Corzo G."/>
        </authorList>
    </citation>
    <scope>NUCLEOTIDE SEQUENCE [MRNA]</scope>
    <scope>FUNCTION</scope>
    <source>
        <tissue>Venom gland</tissue>
    </source>
</reference>
<reference key="4">
    <citation type="journal article" date="2011" name="Toxicon">
        <title>Isolation and molecular cloning of beta-neurotoxins from the venom of the scorpion Centruroides suffusus suffusus.</title>
        <authorList>
            <person name="Espino-Solis G.P."/>
            <person name="Estrada G."/>
            <person name="Olamendi-Portugal T."/>
            <person name="Villegas E."/>
            <person name="Zamudio F."/>
            <person name="Cestele S."/>
            <person name="Possani L.D."/>
            <person name="Corzo G."/>
        </authorList>
    </citation>
    <scope>PROTEIN SEQUENCE OF 1-15</scope>
    <scope>MASS SPECTROMETRY</scope>
    <scope>TOXIC DOSE</scope>
    <source>
        <tissue>Venom</tissue>
    </source>
</reference>
<reference key="5">
    <citation type="journal article" date="2009" name="Immunol. Lett.">
        <title>Heterologous expressed toxic and non-toxic peptide variants of toxin CssII are capable to produce neutralizing antibodies against the venom of the scorpion Centruroides suffusus suffusus.</title>
        <authorList>
            <person name="Hernandez-Salgado K."/>
            <person name="Estrada G."/>
            <person name="Olvera A."/>
            <person name="Coronas F.I."/>
            <person name="Possani L.D."/>
            <person name="Corzo G."/>
        </authorList>
    </citation>
    <scope>MUTAGENESIS OF GLU-15</scope>
</reference>
<reference key="6">
    <citation type="journal article" date="2005" name="J. Biol. Chem.">
        <title>Differential phospholipid binding by site 3 and site 4 toxins. Implications for structural variability between voltage-sensitive sodium channel domains.</title>
        <authorList>
            <person name="Smith J.J."/>
            <person name="Alphy S."/>
            <person name="Seibert A.L."/>
            <person name="Blumenthal K.M."/>
        </authorList>
    </citation>
    <scope>PHOSPHOLIPID-BINDING ACTIVITY</scope>
</reference>
<reference key="7">
    <citation type="journal article" date="2011" name="Peptides">
        <title>Addition of positive charges at the C-terminal peptide region of CssII, a mammalian scorpion peptide toxin, improves its affinity for sodium channels Nav1.6.</title>
        <authorList>
            <person name="Estrada G."/>
            <person name="Restano-Cassulini R."/>
            <person name="Ortiz E."/>
            <person name="Possani L.D."/>
            <person name="Corzo G."/>
        </authorList>
    </citation>
    <scope>MUTAGENESIS OF ASN-66 AND 64-THR--ASN-66</scope>
    <scope>MASS SPECTROMETRY</scope>
</reference>
<reference key="8">
    <citation type="journal article" date="2012" name="Toxicon">
        <title>Negative-shift activation, current reduction and resurgent currents induced by beta-toxins from Centruroides scorpions in sodium channels.</title>
        <authorList>
            <person name="Schiavon E."/>
            <person name="Pedraza-Escalona M."/>
            <person name="Gurrola G.B."/>
            <person name="Olamendi-Portugal T."/>
            <person name="Corzo G."/>
            <person name="Wanke E."/>
            <person name="Possani L.D."/>
        </authorList>
    </citation>
    <scope>FUNCTION</scope>
    <scope>3D-STRUCTURE MODELING</scope>
    <source>
        <tissue>Venom</tissue>
    </source>
</reference>
<reference key="9">
    <citation type="journal article" date="2019" name="Toxins">
        <title>Generation of a broadly cross-neutralizing antibody fragment against several mexican scorpion venoms.</title>
        <authorList>
            <person name="Riano-Umbarila L."/>
            <person name="Gomez-Ramirez I.V."/>
            <person name="Ledezma-Candanoza L.M."/>
            <person name="Olamendi-Portugal T."/>
            <person name="Rodriguez-Rodriguez E.R."/>
            <person name="Fernandez-Taboada G."/>
            <person name="Possani L.D."/>
            <person name="Becerril B."/>
        </authorList>
    </citation>
    <scope>NEUTRALIZATION BY ANTIBODY</scope>
</reference>
<reference key="10">
    <citation type="journal article" date="2012" name="Biochim. Biophys. Acta">
        <title>Solution structure of native and recombinant expressed toxin CssII from the venom of the scorpion Centruroides suffusus suffusus, and their effects on Nav1.5 sodium channels.</title>
        <authorList>
            <person name="Saucedo A.L."/>
            <person name="del Rio-Portilla F."/>
            <person name="Picco C."/>
            <person name="Estrada G."/>
            <person name="Prestipino G."/>
            <person name="Possani L.D."/>
            <person name="Delepierre M."/>
            <person name="Corzo G."/>
        </authorList>
    </citation>
    <scope>STRUCTURE BY NMR OF 1-66</scope>
    <scope>FUNCTION</scope>
    <scope>DISULFIDE BOND</scope>
    <scope>AMIDATION AT ASN-66</scope>
    <scope>MASS SPECTROMETRY</scope>
</reference>
<accession>P08900</accession>
<protein>
    <recommendedName>
        <fullName evidence="17">Beta-mammal toxin Css2</fullName>
    </recommendedName>
    <alternativeName>
        <fullName evidence="11 16">Css II</fullName>
        <shortName evidence="12 13 14 15">CssII</shortName>
    </alternativeName>
</protein>